<feature type="initiator methionine" description="Removed" evidence="4">
    <location>
        <position position="1"/>
    </location>
</feature>
<feature type="chain" id="PRO_0000085900" description="Casein kinase II subunit alpha">
    <location>
        <begin position="2"/>
        <end position="336"/>
    </location>
</feature>
<feature type="domain" description="Protein kinase" evidence="1">
    <location>
        <begin position="37"/>
        <end position="322"/>
    </location>
</feature>
<feature type="active site" description="Proton acceptor" evidence="1 2">
    <location>
        <position position="154"/>
    </location>
</feature>
<feature type="binding site" evidence="1">
    <location>
        <begin position="43"/>
        <end position="51"/>
    </location>
    <ligand>
        <name>ATP</name>
        <dbReference type="ChEBI" id="CHEBI:30616"/>
    </ligand>
</feature>
<feature type="binding site" evidence="1">
    <location>
        <position position="66"/>
    </location>
    <ligand>
        <name>ATP</name>
        <dbReference type="ChEBI" id="CHEBI:30616"/>
    </ligand>
</feature>
<proteinExistence type="evidence at protein level"/>
<sequence>MTLPSAARVYTDVNAHKPDEYWDYENYVVDWGNQDDYQLVRKLGRGKYSEVFEAINITTTEKCVVKILKPVKKKKIKREIKILENLRGGTNIITLLAVVKDPVSRTPALIFEHVNNTDFKQLYQTLTDYEIRYYLFELLKALDYCHSMGIMHRDVKPHNVMIDHENRKLRLIDWGLAEFYHPGQEYNVRVASRYFKGPELLVDYQMYDYSLDMWSLGCMLASMIFRKEPFFHGHDNYDQLVRIAKVLGTEELYAYLDKYNIDLDPRFHDILQRHSRKRWERFVHSDNQHLVSPEALDFLDKLLRYDHVDRLTAREAMAHPYFLPIVNGQMNPNNQQ</sequence>
<reference key="1">
    <citation type="journal article" date="1987" name="Mol. Cell. Biol.">
        <title>Isolation and sequencing of cDNA clones encoding alpha and beta subunits of Drosophila melanogaster casein kinase II.</title>
        <authorList>
            <person name="Saxena A."/>
            <person name="Padmanabha R."/>
            <person name="Glover C.V.C."/>
        </authorList>
    </citation>
    <scope>NUCLEOTIDE SEQUENCE [MRNA]</scope>
</reference>
<reference key="2">
    <citation type="journal article" date="2000" name="Science">
        <title>The genome sequence of Drosophila melanogaster.</title>
        <authorList>
            <person name="Adams M.D."/>
            <person name="Celniker S.E."/>
            <person name="Holt R.A."/>
            <person name="Evans C.A."/>
            <person name="Gocayne J.D."/>
            <person name="Amanatides P.G."/>
            <person name="Scherer S.E."/>
            <person name="Li P.W."/>
            <person name="Hoskins R.A."/>
            <person name="Galle R.F."/>
            <person name="George R.A."/>
            <person name="Lewis S.E."/>
            <person name="Richards S."/>
            <person name="Ashburner M."/>
            <person name="Henderson S.N."/>
            <person name="Sutton G.G."/>
            <person name="Wortman J.R."/>
            <person name="Yandell M.D."/>
            <person name="Zhang Q."/>
            <person name="Chen L.X."/>
            <person name="Brandon R.C."/>
            <person name="Rogers Y.-H.C."/>
            <person name="Blazej R.G."/>
            <person name="Champe M."/>
            <person name="Pfeiffer B.D."/>
            <person name="Wan K.H."/>
            <person name="Doyle C."/>
            <person name="Baxter E.G."/>
            <person name="Helt G."/>
            <person name="Nelson C.R."/>
            <person name="Miklos G.L.G."/>
            <person name="Abril J.F."/>
            <person name="Agbayani A."/>
            <person name="An H.-J."/>
            <person name="Andrews-Pfannkoch C."/>
            <person name="Baldwin D."/>
            <person name="Ballew R.M."/>
            <person name="Basu A."/>
            <person name="Baxendale J."/>
            <person name="Bayraktaroglu L."/>
            <person name="Beasley E.M."/>
            <person name="Beeson K.Y."/>
            <person name="Benos P.V."/>
            <person name="Berman B.P."/>
            <person name="Bhandari D."/>
            <person name="Bolshakov S."/>
            <person name="Borkova D."/>
            <person name="Botchan M.R."/>
            <person name="Bouck J."/>
            <person name="Brokstein P."/>
            <person name="Brottier P."/>
            <person name="Burtis K.C."/>
            <person name="Busam D.A."/>
            <person name="Butler H."/>
            <person name="Cadieu E."/>
            <person name="Center A."/>
            <person name="Chandra I."/>
            <person name="Cherry J.M."/>
            <person name="Cawley S."/>
            <person name="Dahlke C."/>
            <person name="Davenport L.B."/>
            <person name="Davies P."/>
            <person name="de Pablos B."/>
            <person name="Delcher A."/>
            <person name="Deng Z."/>
            <person name="Mays A.D."/>
            <person name="Dew I."/>
            <person name="Dietz S.M."/>
            <person name="Dodson K."/>
            <person name="Doup L.E."/>
            <person name="Downes M."/>
            <person name="Dugan-Rocha S."/>
            <person name="Dunkov B.C."/>
            <person name="Dunn P."/>
            <person name="Durbin K.J."/>
            <person name="Evangelista C.C."/>
            <person name="Ferraz C."/>
            <person name="Ferriera S."/>
            <person name="Fleischmann W."/>
            <person name="Fosler C."/>
            <person name="Gabrielian A.E."/>
            <person name="Garg N.S."/>
            <person name="Gelbart W.M."/>
            <person name="Glasser K."/>
            <person name="Glodek A."/>
            <person name="Gong F."/>
            <person name="Gorrell J.H."/>
            <person name="Gu Z."/>
            <person name="Guan P."/>
            <person name="Harris M."/>
            <person name="Harris N.L."/>
            <person name="Harvey D.A."/>
            <person name="Heiman T.J."/>
            <person name="Hernandez J.R."/>
            <person name="Houck J."/>
            <person name="Hostin D."/>
            <person name="Houston K.A."/>
            <person name="Howland T.J."/>
            <person name="Wei M.-H."/>
            <person name="Ibegwam C."/>
            <person name="Jalali M."/>
            <person name="Kalush F."/>
            <person name="Karpen G.H."/>
            <person name="Ke Z."/>
            <person name="Kennison J.A."/>
            <person name="Ketchum K.A."/>
            <person name="Kimmel B.E."/>
            <person name="Kodira C.D."/>
            <person name="Kraft C.L."/>
            <person name="Kravitz S."/>
            <person name="Kulp D."/>
            <person name="Lai Z."/>
            <person name="Lasko P."/>
            <person name="Lei Y."/>
            <person name="Levitsky A.A."/>
            <person name="Li J.H."/>
            <person name="Li Z."/>
            <person name="Liang Y."/>
            <person name="Lin X."/>
            <person name="Liu X."/>
            <person name="Mattei B."/>
            <person name="McIntosh T.C."/>
            <person name="McLeod M.P."/>
            <person name="McPherson D."/>
            <person name="Merkulov G."/>
            <person name="Milshina N.V."/>
            <person name="Mobarry C."/>
            <person name="Morris J."/>
            <person name="Moshrefi A."/>
            <person name="Mount S.M."/>
            <person name="Moy M."/>
            <person name="Murphy B."/>
            <person name="Murphy L."/>
            <person name="Muzny D.M."/>
            <person name="Nelson D.L."/>
            <person name="Nelson D.R."/>
            <person name="Nelson K.A."/>
            <person name="Nixon K."/>
            <person name="Nusskern D.R."/>
            <person name="Pacleb J.M."/>
            <person name="Palazzolo M."/>
            <person name="Pittman G.S."/>
            <person name="Pan S."/>
            <person name="Pollard J."/>
            <person name="Puri V."/>
            <person name="Reese M.G."/>
            <person name="Reinert K."/>
            <person name="Remington K."/>
            <person name="Saunders R.D.C."/>
            <person name="Scheeler F."/>
            <person name="Shen H."/>
            <person name="Shue B.C."/>
            <person name="Siden-Kiamos I."/>
            <person name="Simpson M."/>
            <person name="Skupski M.P."/>
            <person name="Smith T.J."/>
            <person name="Spier E."/>
            <person name="Spradling A.C."/>
            <person name="Stapleton M."/>
            <person name="Strong R."/>
            <person name="Sun E."/>
            <person name="Svirskas R."/>
            <person name="Tector C."/>
            <person name="Turner R."/>
            <person name="Venter E."/>
            <person name="Wang A.H."/>
            <person name="Wang X."/>
            <person name="Wang Z.-Y."/>
            <person name="Wassarman D.A."/>
            <person name="Weinstock G.M."/>
            <person name="Weissenbach J."/>
            <person name="Williams S.M."/>
            <person name="Woodage T."/>
            <person name="Worley K.C."/>
            <person name="Wu D."/>
            <person name="Yang S."/>
            <person name="Yao Q.A."/>
            <person name="Ye J."/>
            <person name="Yeh R.-F."/>
            <person name="Zaveri J.S."/>
            <person name="Zhan M."/>
            <person name="Zhang G."/>
            <person name="Zhao Q."/>
            <person name="Zheng L."/>
            <person name="Zheng X.H."/>
            <person name="Zhong F.N."/>
            <person name="Zhong W."/>
            <person name="Zhou X."/>
            <person name="Zhu S.C."/>
            <person name="Zhu X."/>
            <person name="Smith H.O."/>
            <person name="Gibbs R.A."/>
            <person name="Myers E.W."/>
            <person name="Rubin G.M."/>
            <person name="Venter J.C."/>
        </authorList>
    </citation>
    <scope>NUCLEOTIDE SEQUENCE [LARGE SCALE GENOMIC DNA]</scope>
    <source>
        <strain>Berkeley</strain>
    </source>
</reference>
<reference key="3">
    <citation type="journal article" date="2002" name="Genome Biol.">
        <title>Annotation of the Drosophila melanogaster euchromatic genome: a systematic review.</title>
        <authorList>
            <person name="Misra S."/>
            <person name="Crosby M.A."/>
            <person name="Mungall C.J."/>
            <person name="Matthews B.B."/>
            <person name="Campbell K.S."/>
            <person name="Hradecky P."/>
            <person name="Huang Y."/>
            <person name="Kaminker J.S."/>
            <person name="Millburn G.H."/>
            <person name="Prochnik S.E."/>
            <person name="Smith C.D."/>
            <person name="Tupy J.L."/>
            <person name="Whitfield E.J."/>
            <person name="Bayraktaroglu L."/>
            <person name="Berman B.P."/>
            <person name="Bettencourt B.R."/>
            <person name="Celniker S.E."/>
            <person name="de Grey A.D.N.J."/>
            <person name="Drysdale R.A."/>
            <person name="Harris N.L."/>
            <person name="Richter J."/>
            <person name="Russo S."/>
            <person name="Schroeder A.J."/>
            <person name="Shu S.Q."/>
            <person name="Stapleton M."/>
            <person name="Yamada C."/>
            <person name="Ashburner M."/>
            <person name="Gelbart W.M."/>
            <person name="Rubin G.M."/>
            <person name="Lewis S.E."/>
        </authorList>
    </citation>
    <scope>GENOME REANNOTATION</scope>
    <source>
        <strain>Berkeley</strain>
    </source>
</reference>
<reference key="4">
    <citation type="journal article" date="2002" name="Genome Biol.">
        <title>A Drosophila full-length cDNA resource.</title>
        <authorList>
            <person name="Stapleton M."/>
            <person name="Carlson J.W."/>
            <person name="Brokstein P."/>
            <person name="Yu C."/>
            <person name="Champe M."/>
            <person name="George R.A."/>
            <person name="Guarin H."/>
            <person name="Kronmiller B."/>
            <person name="Pacleb J.M."/>
            <person name="Park S."/>
            <person name="Wan K.H."/>
            <person name="Rubin G.M."/>
            <person name="Celniker S.E."/>
        </authorList>
    </citation>
    <scope>NUCLEOTIDE SEQUENCE [LARGE SCALE MRNA]</scope>
    <source>
        <strain>Berkeley</strain>
        <tissue>Embryo</tissue>
    </source>
</reference>
<reference key="5">
    <citation type="journal article" date="1987" name="J. Biol. Chem.">
        <title>Casein kinase II of yeast contains two distinct alpha polypeptides and an unusually large beta subunit.</title>
        <authorList>
            <person name="Padmanabha R."/>
            <person name="Glover C.V.C."/>
        </authorList>
    </citation>
    <scope>PROTEIN SEQUENCE OF 2-42</scope>
</reference>
<reference key="6">
    <citation type="journal article" date="2014" name="Mol. Cell. Biol.">
        <title>Drosophila mbm is a nucleolar myc and casein kinase 2 target required for ribosome biogenesis and cell growth of central brain neuroblasts.</title>
        <authorList>
            <person name="Hovhanyan A."/>
            <person name="Herter E.K."/>
            <person name="Pfannstiel J."/>
            <person name="Gallant P."/>
            <person name="Raabe T."/>
        </authorList>
    </citation>
    <scope>CATALYTIC ACTIVITY</scope>
    <scope>COFACTOR</scope>
    <scope>SUBCELLULAR LOCATION</scope>
    <scope>DISRUPTION PHENOTYPE</scope>
</reference>
<keyword id="KW-0067">ATP-binding</keyword>
<keyword id="KW-0903">Direct protein sequencing</keyword>
<keyword id="KW-0418">Kinase</keyword>
<keyword id="KW-0547">Nucleotide-binding</keyword>
<keyword id="KW-0539">Nucleus</keyword>
<keyword id="KW-1185">Reference proteome</keyword>
<keyword id="KW-0723">Serine/threonine-protein kinase</keyword>
<keyword id="KW-0808">Transferase</keyword>
<keyword id="KW-0879">Wnt signaling pathway</keyword>
<accession>P08181</accession>
<accession>Q0E8B4</accession>
<accession>Q9W5T2</accession>
<organism>
    <name type="scientific">Drosophila melanogaster</name>
    <name type="common">Fruit fly</name>
    <dbReference type="NCBI Taxonomy" id="7227"/>
    <lineage>
        <taxon>Eukaryota</taxon>
        <taxon>Metazoa</taxon>
        <taxon>Ecdysozoa</taxon>
        <taxon>Arthropoda</taxon>
        <taxon>Hexapoda</taxon>
        <taxon>Insecta</taxon>
        <taxon>Pterygota</taxon>
        <taxon>Neoptera</taxon>
        <taxon>Endopterygota</taxon>
        <taxon>Diptera</taxon>
        <taxon>Brachycera</taxon>
        <taxon>Muscomorpha</taxon>
        <taxon>Ephydroidea</taxon>
        <taxon>Drosophilidae</taxon>
        <taxon>Drosophila</taxon>
        <taxon>Sophophora</taxon>
    </lineage>
</organism>
<name>CSK2A_DROME</name>
<gene>
    <name type="primary">CkIIalpha</name>
    <name type="synonym">Cask-II-a</name>
    <name type="ORF">CG17520</name>
</gene>
<dbReference type="EC" id="2.7.11.1" evidence="3"/>
<dbReference type="EMBL" id="M16534">
    <property type="protein sequence ID" value="AAA28429.1"/>
    <property type="molecule type" value="mRNA"/>
</dbReference>
<dbReference type="EMBL" id="AE014296">
    <property type="protein sequence ID" value="AAN11415.1"/>
    <property type="molecule type" value="Genomic_DNA"/>
</dbReference>
<dbReference type="EMBL" id="AY069553">
    <property type="protein sequence ID" value="AAL39698.1"/>
    <property type="molecule type" value="mRNA"/>
</dbReference>
<dbReference type="PIR" id="A26688">
    <property type="entry name" value="A26688"/>
</dbReference>
<dbReference type="RefSeq" id="NP_001036624.1">
    <property type="nucleotide sequence ID" value="NM_001043159.3"/>
</dbReference>
<dbReference type="RefSeq" id="NP_001287151.1">
    <property type="nucleotide sequence ID" value="NM_001300222.1"/>
</dbReference>
<dbReference type="RefSeq" id="NP_001287152.1">
    <property type="nucleotide sequence ID" value="NM_001300223.1"/>
</dbReference>
<dbReference type="RefSeq" id="NP_001287153.1">
    <property type="nucleotide sequence ID" value="NM_001300224.1"/>
</dbReference>
<dbReference type="RefSeq" id="NP_524918.1">
    <property type="nucleotide sequence ID" value="NM_080179.5"/>
</dbReference>
<dbReference type="RefSeq" id="NP_730774.1">
    <property type="nucleotide sequence ID" value="NM_168985.2"/>
</dbReference>
<dbReference type="RefSeq" id="NP_730775.1">
    <property type="nucleotide sequence ID" value="NM_168986.2"/>
</dbReference>
<dbReference type="SMR" id="P08181"/>
<dbReference type="BioGRID" id="71396">
    <property type="interactions" value="58"/>
</dbReference>
<dbReference type="DIP" id="DIP-18339N"/>
<dbReference type="FunCoup" id="P08181">
    <property type="interactions" value="1901"/>
</dbReference>
<dbReference type="IntAct" id="P08181">
    <property type="interactions" value="29"/>
</dbReference>
<dbReference type="MINT" id="P08181"/>
<dbReference type="STRING" id="7227.FBpp0311229"/>
<dbReference type="PaxDb" id="7227-FBpp0110433"/>
<dbReference type="DNASU" id="48448"/>
<dbReference type="EnsemblMetazoa" id="FBtr0070042">
    <property type="protein sequence ID" value="FBpp0070041"/>
    <property type="gene ID" value="FBgn0264492"/>
</dbReference>
<dbReference type="EnsemblMetazoa" id="FBtr0070043">
    <property type="protein sequence ID" value="FBpp0070042"/>
    <property type="gene ID" value="FBgn0264492"/>
</dbReference>
<dbReference type="EnsemblMetazoa" id="FBtr0070044">
    <property type="protein sequence ID" value="FBpp0070043"/>
    <property type="gene ID" value="FBgn0264492"/>
</dbReference>
<dbReference type="EnsemblMetazoa" id="FBtr0111141">
    <property type="protein sequence ID" value="FBpp0110433"/>
    <property type="gene ID" value="FBgn0264492"/>
</dbReference>
<dbReference type="EnsemblMetazoa" id="FBtr0344974">
    <property type="protein sequence ID" value="FBpp0311229"/>
    <property type="gene ID" value="FBgn0264492"/>
</dbReference>
<dbReference type="EnsemblMetazoa" id="FBtr0345138">
    <property type="protein sequence ID" value="FBpp0311359"/>
    <property type="gene ID" value="FBgn0264492"/>
</dbReference>
<dbReference type="EnsemblMetazoa" id="FBtr0345139">
    <property type="protein sequence ID" value="FBpp0311360"/>
    <property type="gene ID" value="FBgn0264492"/>
</dbReference>
<dbReference type="GeneID" id="48448"/>
<dbReference type="KEGG" id="dme:Dmel_CG17520"/>
<dbReference type="AGR" id="FB:FBgn0264492"/>
<dbReference type="CTD" id="48448"/>
<dbReference type="FlyBase" id="FBgn0264492">
    <property type="gene designation" value="CkIIalpha"/>
</dbReference>
<dbReference type="VEuPathDB" id="VectorBase:FBgn0264492"/>
<dbReference type="eggNOG" id="KOG0668">
    <property type="taxonomic scope" value="Eukaryota"/>
</dbReference>
<dbReference type="GeneTree" id="ENSGT00390000004215"/>
<dbReference type="HOGENOM" id="CLU_000288_70_4_1"/>
<dbReference type="InParanoid" id="P08181"/>
<dbReference type="OMA" id="ECHMIEW"/>
<dbReference type="OrthoDB" id="10254671at2759"/>
<dbReference type="PhylomeDB" id="P08181"/>
<dbReference type="BRENDA" id="2.7.11.1">
    <property type="organism ID" value="1994"/>
</dbReference>
<dbReference type="Reactome" id="R-DME-201688">
    <property type="pathway name" value="WNT mediated activation of DVL"/>
</dbReference>
<dbReference type="Reactome" id="R-DME-209190">
    <property type="pathway name" value="Phosphorylation of CI"/>
</dbReference>
<dbReference type="Reactome" id="R-DME-209214">
    <property type="pathway name" value="Phosphorylation of SMO"/>
</dbReference>
<dbReference type="Reactome" id="R-DME-2514853">
    <property type="pathway name" value="Condensation of Prometaphase Chromosomes"/>
</dbReference>
<dbReference type="Reactome" id="R-DME-432553">
    <property type="pathway name" value="Phosphorylation of PER and TIM"/>
</dbReference>
<dbReference type="Reactome" id="R-DME-6804756">
    <property type="pathway name" value="Regulation of TP53 Activity through Phosphorylation"/>
</dbReference>
<dbReference type="Reactome" id="R-DME-6814122">
    <property type="pathway name" value="Cooperation of PDCL (PhLP1) and TRiC/CCT in G-protein beta folding"/>
</dbReference>
<dbReference type="Reactome" id="R-DME-8934903">
    <property type="pathway name" value="Receptor Mediated Mitophagy"/>
</dbReference>
<dbReference type="Reactome" id="R-DME-8948751">
    <property type="pathway name" value="Regulation of PTEN stability and activity"/>
</dbReference>
<dbReference type="SignaLink" id="P08181"/>
<dbReference type="BioGRID-ORCS" id="48448">
    <property type="hits" value="1 hit in 3 CRISPR screens"/>
</dbReference>
<dbReference type="ChiTaRS" id="CkIIalpha">
    <property type="organism name" value="fly"/>
</dbReference>
<dbReference type="GenomeRNAi" id="48448"/>
<dbReference type="PRO" id="PR:P08181"/>
<dbReference type="Proteomes" id="UP000000803">
    <property type="component" value="Chromosome 3L"/>
</dbReference>
<dbReference type="Bgee" id="FBgn0264492">
    <property type="expression patterns" value="Expressed in cleaving embryo and 270 other cell types or tissues"/>
</dbReference>
<dbReference type="ExpressionAtlas" id="P08181">
    <property type="expression patterns" value="baseline and differential"/>
</dbReference>
<dbReference type="GO" id="GO:0005737">
    <property type="term" value="C:cytoplasm"/>
    <property type="evidence" value="ECO:0000314"/>
    <property type="project" value="FlyBase"/>
</dbReference>
<dbReference type="GO" id="GO:0005829">
    <property type="term" value="C:cytosol"/>
    <property type="evidence" value="ECO:0000314"/>
    <property type="project" value="FlyBase"/>
</dbReference>
<dbReference type="GO" id="GO:0005730">
    <property type="term" value="C:nucleolus"/>
    <property type="evidence" value="ECO:0007669"/>
    <property type="project" value="UniProtKB-SubCell"/>
</dbReference>
<dbReference type="GO" id="GO:0005634">
    <property type="term" value="C:nucleus"/>
    <property type="evidence" value="ECO:0000314"/>
    <property type="project" value="FlyBase"/>
</dbReference>
<dbReference type="GO" id="GO:0005956">
    <property type="term" value="C:protein kinase CK2 complex"/>
    <property type="evidence" value="ECO:0000314"/>
    <property type="project" value="FlyBase"/>
</dbReference>
<dbReference type="GO" id="GO:0005524">
    <property type="term" value="F:ATP binding"/>
    <property type="evidence" value="ECO:0007669"/>
    <property type="project" value="UniProtKB-KW"/>
</dbReference>
<dbReference type="GO" id="GO:0106310">
    <property type="term" value="F:protein serine kinase activity"/>
    <property type="evidence" value="ECO:0007669"/>
    <property type="project" value="RHEA"/>
</dbReference>
<dbReference type="GO" id="GO:0004674">
    <property type="term" value="F:protein serine/threonine kinase activity"/>
    <property type="evidence" value="ECO:0000314"/>
    <property type="project" value="FlyBase"/>
</dbReference>
<dbReference type="GO" id="GO:0002118">
    <property type="term" value="P:aggressive behavior"/>
    <property type="evidence" value="ECO:0000315"/>
    <property type="project" value="FlyBase"/>
</dbReference>
<dbReference type="GO" id="GO:0022416">
    <property type="term" value="P:chaeta development"/>
    <property type="evidence" value="ECO:0000315"/>
    <property type="project" value="FlyBase"/>
</dbReference>
<dbReference type="GO" id="GO:0007623">
    <property type="term" value="P:circadian rhythm"/>
    <property type="evidence" value="ECO:0000315"/>
    <property type="project" value="FlyBase"/>
</dbReference>
<dbReference type="GO" id="GO:0048749">
    <property type="term" value="P:compound eye development"/>
    <property type="evidence" value="ECO:0000315"/>
    <property type="project" value="FlyBase"/>
</dbReference>
<dbReference type="GO" id="GO:0006974">
    <property type="term" value="P:DNA damage response"/>
    <property type="evidence" value="ECO:0000318"/>
    <property type="project" value="GO_Central"/>
</dbReference>
<dbReference type="GO" id="GO:0060810">
    <property type="term" value="P:intracellular mRNA localization involved in pattern specification process"/>
    <property type="evidence" value="ECO:0000316"/>
    <property type="project" value="FlyBase"/>
</dbReference>
<dbReference type="GO" id="GO:0046331">
    <property type="term" value="P:lateral inhibition"/>
    <property type="evidence" value="ECO:0000315"/>
    <property type="project" value="FlyBase"/>
</dbReference>
<dbReference type="GO" id="GO:0045475">
    <property type="term" value="P:locomotor rhythm"/>
    <property type="evidence" value="ECO:0000315"/>
    <property type="project" value="FlyBase"/>
</dbReference>
<dbReference type="GO" id="GO:0000278">
    <property type="term" value="P:mitotic cell cycle"/>
    <property type="evidence" value="ECO:0007001"/>
    <property type="project" value="FlyBase"/>
</dbReference>
<dbReference type="GO" id="GO:0032435">
    <property type="term" value="P:negative regulation of proteasomal ubiquitin-dependent protein catabolic process"/>
    <property type="evidence" value="ECO:0000315"/>
    <property type="project" value="FlyBase"/>
</dbReference>
<dbReference type="GO" id="GO:0007310">
    <property type="term" value="P:oocyte dorsal/ventral axis specification"/>
    <property type="evidence" value="ECO:0000315"/>
    <property type="project" value="FlyBase"/>
</dbReference>
<dbReference type="GO" id="GO:0045880">
    <property type="term" value="P:positive regulation of smoothened signaling pathway"/>
    <property type="evidence" value="ECO:0000315"/>
    <property type="project" value="FlyBase"/>
</dbReference>
<dbReference type="GO" id="GO:0051726">
    <property type="term" value="P:regulation of cell cycle"/>
    <property type="evidence" value="ECO:0000318"/>
    <property type="project" value="GO_Central"/>
</dbReference>
<dbReference type="GO" id="GO:0031647">
    <property type="term" value="P:regulation of protein stability"/>
    <property type="evidence" value="ECO:0000315"/>
    <property type="project" value="FlyBase"/>
</dbReference>
<dbReference type="GO" id="GO:0016055">
    <property type="term" value="P:Wnt signaling pathway"/>
    <property type="evidence" value="ECO:0007669"/>
    <property type="project" value="UniProtKB-KW"/>
</dbReference>
<dbReference type="CDD" id="cd14132">
    <property type="entry name" value="STKc_CK2_alpha"/>
    <property type="match status" value="1"/>
</dbReference>
<dbReference type="FunFam" id="1.10.510.10:FF:000059">
    <property type="entry name" value="Casein kinase II subunit alpha"/>
    <property type="match status" value="1"/>
</dbReference>
<dbReference type="FunFam" id="3.30.200.20:FF:000088">
    <property type="entry name" value="Casein kinase II subunit alpha"/>
    <property type="match status" value="1"/>
</dbReference>
<dbReference type="Gene3D" id="3.30.200.20">
    <property type="entry name" value="Phosphorylase Kinase, domain 1"/>
    <property type="match status" value="1"/>
</dbReference>
<dbReference type="Gene3D" id="1.10.510.10">
    <property type="entry name" value="Transferase(Phosphotransferase) domain 1"/>
    <property type="match status" value="1"/>
</dbReference>
<dbReference type="InterPro" id="IPR045216">
    <property type="entry name" value="CK2_alpha"/>
</dbReference>
<dbReference type="InterPro" id="IPR011009">
    <property type="entry name" value="Kinase-like_dom_sf"/>
</dbReference>
<dbReference type="InterPro" id="IPR000719">
    <property type="entry name" value="Prot_kinase_dom"/>
</dbReference>
<dbReference type="InterPro" id="IPR017441">
    <property type="entry name" value="Protein_kinase_ATP_BS"/>
</dbReference>
<dbReference type="InterPro" id="IPR008271">
    <property type="entry name" value="Ser/Thr_kinase_AS"/>
</dbReference>
<dbReference type="PANTHER" id="PTHR24054">
    <property type="entry name" value="CASEIN KINASE II SUBUNIT ALPHA"/>
    <property type="match status" value="1"/>
</dbReference>
<dbReference type="PANTHER" id="PTHR24054:SF0">
    <property type="entry name" value="CASEIN KINASE II SUBUNIT ALPHA"/>
    <property type="match status" value="1"/>
</dbReference>
<dbReference type="Pfam" id="PF00069">
    <property type="entry name" value="Pkinase"/>
    <property type="match status" value="1"/>
</dbReference>
<dbReference type="SMART" id="SM00220">
    <property type="entry name" value="S_TKc"/>
    <property type="match status" value="1"/>
</dbReference>
<dbReference type="SUPFAM" id="SSF56112">
    <property type="entry name" value="Protein kinase-like (PK-like)"/>
    <property type="match status" value="1"/>
</dbReference>
<dbReference type="PROSITE" id="PS00107">
    <property type="entry name" value="PROTEIN_KINASE_ATP"/>
    <property type="match status" value="1"/>
</dbReference>
<dbReference type="PROSITE" id="PS50011">
    <property type="entry name" value="PROTEIN_KINASE_DOM"/>
    <property type="match status" value="1"/>
</dbReference>
<dbReference type="PROSITE" id="PS00108">
    <property type="entry name" value="PROTEIN_KINASE_ST"/>
    <property type="match status" value="1"/>
</dbReference>
<comment type="function">
    <text>Casein kinases are operationally defined by their preferential utilization of acidic proteins such as caseins as substrates. The alpha chain contains the catalytic site. May participate in Wnt signaling.</text>
</comment>
<comment type="catalytic activity">
    <reaction evidence="3">
        <text>L-seryl-[protein] + ATP = O-phospho-L-seryl-[protein] + ADP + H(+)</text>
        <dbReference type="Rhea" id="RHEA:17989"/>
        <dbReference type="Rhea" id="RHEA-COMP:9863"/>
        <dbReference type="Rhea" id="RHEA-COMP:11604"/>
        <dbReference type="ChEBI" id="CHEBI:15378"/>
        <dbReference type="ChEBI" id="CHEBI:29999"/>
        <dbReference type="ChEBI" id="CHEBI:30616"/>
        <dbReference type="ChEBI" id="CHEBI:83421"/>
        <dbReference type="ChEBI" id="CHEBI:456216"/>
        <dbReference type="EC" id="2.7.11.1"/>
    </reaction>
</comment>
<comment type="catalytic activity">
    <reaction evidence="3">
        <text>L-threonyl-[protein] + ATP = O-phospho-L-threonyl-[protein] + ADP + H(+)</text>
        <dbReference type="Rhea" id="RHEA:46608"/>
        <dbReference type="Rhea" id="RHEA-COMP:11060"/>
        <dbReference type="Rhea" id="RHEA-COMP:11605"/>
        <dbReference type="ChEBI" id="CHEBI:15378"/>
        <dbReference type="ChEBI" id="CHEBI:30013"/>
        <dbReference type="ChEBI" id="CHEBI:30616"/>
        <dbReference type="ChEBI" id="CHEBI:61977"/>
        <dbReference type="ChEBI" id="CHEBI:456216"/>
        <dbReference type="EC" id="2.7.11.1"/>
    </reaction>
</comment>
<comment type="cofactor">
    <cofactor evidence="3">
        <name>Mg(2+)</name>
        <dbReference type="ChEBI" id="CHEBI:18420"/>
    </cofactor>
</comment>
<comment type="subunit">
    <text>Tetramer of two alpha and two beta chains.</text>
</comment>
<comment type="interaction">
    <interactant intactId="EBI-93115">
        <id>P08181</id>
    </interactant>
    <interactant intactId="EBI-181456">
        <id>O96863</id>
        <label>CkIIbeta2</label>
    </interactant>
    <organismsDiffer>false</organismsDiffer>
    <experiments>4</experiments>
</comment>
<comment type="interaction">
    <interactant intactId="EBI-93115">
        <id>P08181</id>
    </interactant>
    <interactant intactId="EBI-143834">
        <id>O61735</id>
        <label>Clk</label>
    </interactant>
    <organismsDiffer>false</organismsDiffer>
    <experiments>2</experiments>
</comment>
<comment type="interaction">
    <interactant intactId="EBI-93115">
        <id>P08181</id>
    </interactant>
    <interactant intactId="EBI-185388">
        <id>P13098</id>
        <label>E(spl)m8-HLH</label>
    </interactant>
    <organismsDiffer>false</organismsDiffer>
    <experiments>3</experiments>
</comment>
<comment type="subcellular location">
    <subcellularLocation>
        <location evidence="3">Nucleus</location>
        <location evidence="3">Nucleolus</location>
    </subcellularLocation>
</comment>
<comment type="disruption phenotype">
    <text evidence="3">RNAi-mediated knockdown results in mislocalization of mbm in interphase cells with partial localization to the cytoplasm as well as nucleolar expression.</text>
</comment>
<comment type="similarity">
    <text evidence="1">Belongs to the protein kinase superfamily. Ser/Thr protein kinase family. CK2 subfamily.</text>
</comment>
<protein>
    <recommendedName>
        <fullName>Casein kinase II subunit alpha</fullName>
        <shortName>CK II subunit alpha</shortName>
        <ecNumber evidence="3">2.7.11.1</ecNumber>
    </recommendedName>
</protein>
<evidence type="ECO:0000255" key="1">
    <source>
        <dbReference type="PROSITE-ProRule" id="PRU00159"/>
    </source>
</evidence>
<evidence type="ECO:0000255" key="2">
    <source>
        <dbReference type="PROSITE-ProRule" id="PRU10027"/>
    </source>
</evidence>
<evidence type="ECO:0000269" key="3">
    <source>
    </source>
</evidence>
<evidence type="ECO:0000269" key="4">
    <source>
    </source>
</evidence>